<feature type="chain" id="PRO_0000383748" description="F-box/SPRY domain-containing protein 1">
    <location>
        <begin position="1"/>
        <end position="332"/>
    </location>
</feature>
<feature type="domain" description="F-box" evidence="3">
    <location>
        <begin position="79"/>
        <end position="127"/>
    </location>
</feature>
<feature type="domain" description="B30.2/SPRY" evidence="4">
    <location>
        <begin position="138"/>
        <end position="330"/>
    </location>
</feature>
<feature type="region of interest" description="Disordered" evidence="5">
    <location>
        <begin position="1"/>
        <end position="81"/>
    </location>
</feature>
<feature type="compositionally biased region" description="Acidic residues" evidence="5">
    <location>
        <begin position="1"/>
        <end position="10"/>
    </location>
</feature>
<feature type="compositionally biased region" description="Polar residues" evidence="5">
    <location>
        <begin position="15"/>
        <end position="24"/>
    </location>
</feature>
<accession>A8XT88</accession>
<dbReference type="EMBL" id="HE600936">
    <property type="protein sequence ID" value="CAP35691.1"/>
    <property type="molecule type" value="Genomic_DNA"/>
</dbReference>
<dbReference type="SMR" id="A8XT88"/>
<dbReference type="FunCoup" id="A8XT88">
    <property type="interactions" value="1987"/>
</dbReference>
<dbReference type="STRING" id="6238.A8XT88"/>
<dbReference type="EnsemblMetazoa" id="CBG18196.1">
    <property type="protein sequence ID" value="CBG18196.1"/>
    <property type="gene ID" value="WBGene00037661"/>
</dbReference>
<dbReference type="EnsemblMetazoa" id="CBG18196.2">
    <property type="protein sequence ID" value="CBG18196.2"/>
    <property type="gene ID" value="WBGene00037661"/>
</dbReference>
<dbReference type="KEGG" id="cbr:CBG_18196"/>
<dbReference type="CTD" id="8584218"/>
<dbReference type="WormBase" id="CBG18196">
    <property type="protein sequence ID" value="CBP04261"/>
    <property type="gene ID" value="WBGene00037661"/>
    <property type="gene designation" value="Cbr-fsn-1"/>
</dbReference>
<dbReference type="eggNOG" id="KOG3953">
    <property type="taxonomic scope" value="Eukaryota"/>
</dbReference>
<dbReference type="HOGENOM" id="CLU_046756_1_0_1"/>
<dbReference type="InParanoid" id="A8XT88"/>
<dbReference type="OMA" id="NNEVWRY"/>
<dbReference type="UniPathway" id="UPA00143"/>
<dbReference type="Proteomes" id="UP000008549">
    <property type="component" value="Unassembled WGS sequence"/>
</dbReference>
<dbReference type="GO" id="GO:0031594">
    <property type="term" value="C:neuromuscular junction"/>
    <property type="evidence" value="ECO:0007669"/>
    <property type="project" value="EnsemblMetazoa"/>
</dbReference>
<dbReference type="GO" id="GO:0043005">
    <property type="term" value="C:neuron projection"/>
    <property type="evidence" value="ECO:0007669"/>
    <property type="project" value="EnsemblMetazoa"/>
</dbReference>
<dbReference type="GO" id="GO:0098793">
    <property type="term" value="C:presynapse"/>
    <property type="evidence" value="ECO:0007669"/>
    <property type="project" value="EnsemblMetazoa"/>
</dbReference>
<dbReference type="GO" id="GO:0019005">
    <property type="term" value="C:SCF ubiquitin ligase complex"/>
    <property type="evidence" value="ECO:0000318"/>
    <property type="project" value="GO_Central"/>
</dbReference>
<dbReference type="GO" id="GO:0045202">
    <property type="term" value="C:synapse"/>
    <property type="evidence" value="ECO:0000318"/>
    <property type="project" value="GO_Central"/>
</dbReference>
<dbReference type="GO" id="GO:0002020">
    <property type="term" value="F:protease binding"/>
    <property type="evidence" value="ECO:0007669"/>
    <property type="project" value="EnsemblMetazoa"/>
</dbReference>
<dbReference type="GO" id="GO:0040024">
    <property type="term" value="P:dauer larval development"/>
    <property type="evidence" value="ECO:0007669"/>
    <property type="project" value="EnsemblMetazoa"/>
</dbReference>
<dbReference type="GO" id="GO:0008340">
    <property type="term" value="P:determination of adult lifespan"/>
    <property type="evidence" value="ECO:0007669"/>
    <property type="project" value="EnsemblMetazoa"/>
</dbReference>
<dbReference type="GO" id="GO:0043066">
    <property type="term" value="P:negative regulation of apoptotic process"/>
    <property type="evidence" value="ECO:0007669"/>
    <property type="project" value="EnsemblMetazoa"/>
</dbReference>
<dbReference type="GO" id="GO:0030517">
    <property type="term" value="P:negative regulation of axon extension"/>
    <property type="evidence" value="ECO:0007669"/>
    <property type="project" value="EnsemblMetazoa"/>
</dbReference>
<dbReference type="GO" id="GO:0048681">
    <property type="term" value="P:negative regulation of axon regeneration"/>
    <property type="evidence" value="ECO:0007669"/>
    <property type="project" value="EnsemblMetazoa"/>
</dbReference>
<dbReference type="GO" id="GO:0043518">
    <property type="term" value="P:negative regulation of DNA damage response, signal transduction by p53 class mediator"/>
    <property type="evidence" value="ECO:0007669"/>
    <property type="project" value="EnsemblMetazoa"/>
</dbReference>
<dbReference type="GO" id="GO:0010629">
    <property type="term" value="P:negative regulation of gene expression"/>
    <property type="evidence" value="ECO:0007669"/>
    <property type="project" value="EnsemblMetazoa"/>
</dbReference>
<dbReference type="GO" id="GO:1900075">
    <property type="term" value="P:positive regulation of neuromuscular synaptic transmission"/>
    <property type="evidence" value="ECO:0007669"/>
    <property type="project" value="EnsemblMetazoa"/>
</dbReference>
<dbReference type="GO" id="GO:1900182">
    <property type="term" value="P:positive regulation of protein localization to nucleus"/>
    <property type="evidence" value="ECO:0007669"/>
    <property type="project" value="EnsemblMetazoa"/>
</dbReference>
<dbReference type="GO" id="GO:0045887">
    <property type="term" value="P:positive regulation of synaptic assembly at neuromuscular junction"/>
    <property type="evidence" value="ECO:0007669"/>
    <property type="project" value="EnsemblMetazoa"/>
</dbReference>
<dbReference type="GO" id="GO:0043161">
    <property type="term" value="P:proteasome-mediated ubiquitin-dependent protein catabolic process"/>
    <property type="evidence" value="ECO:0000318"/>
    <property type="project" value="GO_Central"/>
</dbReference>
<dbReference type="GO" id="GO:0016567">
    <property type="term" value="P:protein ubiquitination"/>
    <property type="evidence" value="ECO:0007669"/>
    <property type="project" value="UniProtKB-UniPathway"/>
</dbReference>
<dbReference type="GO" id="GO:0010212">
    <property type="term" value="P:response to ionizing radiation"/>
    <property type="evidence" value="ECO:0007669"/>
    <property type="project" value="EnsemblMetazoa"/>
</dbReference>
<dbReference type="GO" id="GO:0060386">
    <property type="term" value="P:synapse assembly involved in innervation"/>
    <property type="evidence" value="ECO:0000318"/>
    <property type="project" value="GO_Central"/>
</dbReference>
<dbReference type="CDD" id="cd12907">
    <property type="entry name" value="SPRY_Fbox"/>
    <property type="match status" value="1"/>
</dbReference>
<dbReference type="FunFam" id="1.20.1280.50:FF:000055">
    <property type="entry name" value="F-box/SPRY domain-containing protein 1"/>
    <property type="match status" value="1"/>
</dbReference>
<dbReference type="FunFam" id="2.60.120.920:FF:000017">
    <property type="entry name" value="F-box/SPRY domain-containing protein 1"/>
    <property type="match status" value="1"/>
</dbReference>
<dbReference type="Gene3D" id="1.20.1280.50">
    <property type="match status" value="1"/>
</dbReference>
<dbReference type="Gene3D" id="2.60.120.920">
    <property type="match status" value="1"/>
</dbReference>
<dbReference type="InterPro" id="IPR001870">
    <property type="entry name" value="B30.2/SPRY"/>
</dbReference>
<dbReference type="InterPro" id="IPR043136">
    <property type="entry name" value="B30.2/SPRY_sf"/>
</dbReference>
<dbReference type="InterPro" id="IPR013320">
    <property type="entry name" value="ConA-like_dom_sf"/>
</dbReference>
<dbReference type="InterPro" id="IPR036047">
    <property type="entry name" value="F-box-like_dom_sf"/>
</dbReference>
<dbReference type="InterPro" id="IPR001810">
    <property type="entry name" value="F-box_dom"/>
</dbReference>
<dbReference type="InterPro" id="IPR050672">
    <property type="entry name" value="FBXO45-Fsn/SPSB_families"/>
</dbReference>
<dbReference type="InterPro" id="IPR003877">
    <property type="entry name" value="SPRY_dom"/>
</dbReference>
<dbReference type="InterPro" id="IPR035784">
    <property type="entry name" value="SPRY_FBXO45"/>
</dbReference>
<dbReference type="PANTHER" id="PTHR12245:SF7">
    <property type="entry name" value="F-BOX_SPRY DOMAIN-CONTAINING PROTEIN 1"/>
    <property type="match status" value="1"/>
</dbReference>
<dbReference type="PANTHER" id="PTHR12245">
    <property type="entry name" value="SPRY DOMAIN CONTAINING SOCS BOX PROTEIN"/>
    <property type="match status" value="1"/>
</dbReference>
<dbReference type="Pfam" id="PF12937">
    <property type="entry name" value="F-box-like"/>
    <property type="match status" value="1"/>
</dbReference>
<dbReference type="Pfam" id="PF00622">
    <property type="entry name" value="SPRY"/>
    <property type="match status" value="1"/>
</dbReference>
<dbReference type="SMART" id="SM00256">
    <property type="entry name" value="FBOX"/>
    <property type="match status" value="1"/>
</dbReference>
<dbReference type="SMART" id="SM00449">
    <property type="entry name" value="SPRY"/>
    <property type="match status" value="1"/>
</dbReference>
<dbReference type="SUPFAM" id="SSF49899">
    <property type="entry name" value="Concanavalin A-like lectins/glucanases"/>
    <property type="match status" value="1"/>
</dbReference>
<dbReference type="SUPFAM" id="SSF81383">
    <property type="entry name" value="F-box domain"/>
    <property type="match status" value="1"/>
</dbReference>
<dbReference type="PROSITE" id="PS50188">
    <property type="entry name" value="B302_SPRY"/>
    <property type="match status" value="1"/>
</dbReference>
<dbReference type="PROSITE" id="PS50181">
    <property type="entry name" value="FBOX"/>
    <property type="match status" value="1"/>
</dbReference>
<proteinExistence type="inferred from homology"/>
<evidence type="ECO:0000250" key="1"/>
<evidence type="ECO:0000250" key="2">
    <source>
        <dbReference type="UniProtKB" id="Q18223"/>
    </source>
</evidence>
<evidence type="ECO:0000255" key="3">
    <source>
        <dbReference type="PROSITE-ProRule" id="PRU00080"/>
    </source>
</evidence>
<evidence type="ECO:0000255" key="4">
    <source>
        <dbReference type="PROSITE-ProRule" id="PRU00548"/>
    </source>
</evidence>
<evidence type="ECO:0000256" key="5">
    <source>
        <dbReference type="SAM" id="MobiDB-lite"/>
    </source>
</evidence>
<evidence type="ECO:0000305" key="6"/>
<sequence>MTENNEETIVPDEQCNLTSSTPMKSSDLENVESPIERKISIVECDGEGNPPIESSEETPPDLTSHSVAPRRRRSPRRPEVSASRLPLKVLNQIFQYLSLKDLRSAMLTCHSWNNALSMEDSDIWQQLLVQKLPEAAHSDPFLFVELRSARKKLRAWYFAWNTNDISRNNYIRTNGFTVHRQPVAQSTDGVRGKRGVSQGVHAFDITWDGPLGTVAVVGFATKHAALHCVGYIALLGSDDQSWGWNLVDNVLMHNGVQLGVYPKMNNPPKYEVGEKIRLVIDCDMHVAYFERNSEFLGIAFSHIPPLRLFPAVCAVYGNTEVTMVYVGSPQMG</sequence>
<protein>
    <recommendedName>
        <fullName>F-box/SPRY domain-containing protein 1</fullName>
    </recommendedName>
    <alternativeName>
        <fullName>F-box synaptic protein 1</fullName>
    </alternativeName>
</protein>
<name>FBSP1_CAEBR</name>
<gene>
    <name type="primary">fsn-1</name>
    <name type="ORF">CBG18196</name>
</gene>
<organism>
    <name type="scientific">Caenorhabditis briggsae</name>
    <dbReference type="NCBI Taxonomy" id="6238"/>
    <lineage>
        <taxon>Eukaryota</taxon>
        <taxon>Metazoa</taxon>
        <taxon>Ecdysozoa</taxon>
        <taxon>Nematoda</taxon>
        <taxon>Chromadorea</taxon>
        <taxon>Rhabditida</taxon>
        <taxon>Rhabditina</taxon>
        <taxon>Rhabditomorpha</taxon>
        <taxon>Rhabditoidea</taxon>
        <taxon>Rhabditidae</taxon>
        <taxon>Peloderinae</taxon>
        <taxon>Caenorhabditis</taxon>
    </lineage>
</organism>
<comment type="function">
    <text evidence="2">Component of a SCF (SKP1-CUL1-F-box protein) E3 ubiquitin ligase complex which is required for the restriction and/or maturation of synapses in GABAergic neuromuscular junction (NMJ) presynaptic neurons. Promotes NRJ synapse development and synaptic transmission by negatively regulating the daf-2/InsR pathway in muscles. By targeting convertase egl-3 for degradation, negatively modulates insulin-like protein ins-4 and ins-6 processing. May stabilize synapse formation by promoting the down-regulation of scd-2. Regulates axon termination in PLM and ALM neurons.</text>
</comment>
<comment type="pathway">
    <text>Protein modification; protein ubiquitination.</text>
</comment>
<comment type="subunit">
    <text evidence="2">Component of an SCF (SKP1-CUL1-F-box protein) E3 ubiquitin ligase complex composed of cul-1, fsn-1, rpm-1 and skr-1. Interacts (via SPRY domain) with scd-2 (via cytoplasmic domain). Interacts (via SPRY domain) with convertase egl-3 (via C-terminus).</text>
</comment>
<comment type="subcellular location">
    <subcellularLocation>
        <location evidence="1">Synapse</location>
    </subcellularLocation>
</comment>
<comment type="similarity">
    <text evidence="6">Belongs to the FBXO45/Fsn family.</text>
</comment>
<keyword id="KW-1185">Reference proteome</keyword>
<keyword id="KW-0770">Synapse</keyword>
<keyword id="KW-0833">Ubl conjugation pathway</keyword>
<reference key="1">
    <citation type="journal article" date="2003" name="PLoS Biol.">
        <title>The genome sequence of Caenorhabditis briggsae: a platform for comparative genomics.</title>
        <authorList>
            <person name="Stein L.D."/>
            <person name="Bao Z."/>
            <person name="Blasiar D."/>
            <person name="Blumenthal T."/>
            <person name="Brent M.R."/>
            <person name="Chen N."/>
            <person name="Chinwalla A."/>
            <person name="Clarke L."/>
            <person name="Clee C."/>
            <person name="Coghlan A."/>
            <person name="Coulson A."/>
            <person name="D'Eustachio P."/>
            <person name="Fitch D.H.A."/>
            <person name="Fulton L.A."/>
            <person name="Fulton R.E."/>
            <person name="Griffiths-Jones S."/>
            <person name="Harris T.W."/>
            <person name="Hillier L.W."/>
            <person name="Kamath R."/>
            <person name="Kuwabara P.E."/>
            <person name="Mardis E.R."/>
            <person name="Marra M.A."/>
            <person name="Miner T.L."/>
            <person name="Minx P."/>
            <person name="Mullikin J.C."/>
            <person name="Plumb R.W."/>
            <person name="Rogers J."/>
            <person name="Schein J.E."/>
            <person name="Sohrmann M."/>
            <person name="Spieth J."/>
            <person name="Stajich J.E."/>
            <person name="Wei C."/>
            <person name="Willey D."/>
            <person name="Wilson R.K."/>
            <person name="Durbin R.M."/>
            <person name="Waterston R.H."/>
        </authorList>
    </citation>
    <scope>NUCLEOTIDE SEQUENCE [LARGE SCALE GENOMIC DNA]</scope>
    <source>
        <strain>AF16</strain>
    </source>
</reference>